<organism>
    <name type="scientific">Shewanella woodyi (strain ATCC 51908 / MS32)</name>
    <dbReference type="NCBI Taxonomy" id="392500"/>
    <lineage>
        <taxon>Bacteria</taxon>
        <taxon>Pseudomonadati</taxon>
        <taxon>Pseudomonadota</taxon>
        <taxon>Gammaproteobacteria</taxon>
        <taxon>Alteromonadales</taxon>
        <taxon>Shewanellaceae</taxon>
        <taxon>Shewanella</taxon>
    </lineage>
</organism>
<evidence type="ECO:0000255" key="1">
    <source>
        <dbReference type="HAMAP-Rule" id="MF_01595"/>
    </source>
</evidence>
<accession>B1KRQ5</accession>
<reference key="1">
    <citation type="submission" date="2008-02" db="EMBL/GenBank/DDBJ databases">
        <title>Complete sequence of Shewanella woodyi ATCC 51908.</title>
        <authorList>
            <consortium name="US DOE Joint Genome Institute"/>
            <person name="Copeland A."/>
            <person name="Lucas S."/>
            <person name="Lapidus A."/>
            <person name="Glavina del Rio T."/>
            <person name="Dalin E."/>
            <person name="Tice H."/>
            <person name="Bruce D."/>
            <person name="Goodwin L."/>
            <person name="Pitluck S."/>
            <person name="Sims D."/>
            <person name="Brettin T."/>
            <person name="Detter J.C."/>
            <person name="Han C."/>
            <person name="Kuske C.R."/>
            <person name="Schmutz J."/>
            <person name="Larimer F."/>
            <person name="Land M."/>
            <person name="Hauser L."/>
            <person name="Kyrpides N."/>
            <person name="Lykidis A."/>
            <person name="Zhao J.-S."/>
            <person name="Richardson P."/>
        </authorList>
    </citation>
    <scope>NUCLEOTIDE SEQUENCE [LARGE SCALE GENOMIC DNA]</scope>
    <source>
        <strain>ATCC 51908 / MS32</strain>
    </source>
</reference>
<keyword id="KW-0963">Cytoplasm</keyword>
<keyword id="KW-0460">Magnesium</keyword>
<keyword id="KW-0479">Metal-binding</keyword>
<keyword id="KW-0548">Nucleotidyltransferase</keyword>
<keyword id="KW-1185">Reference proteome</keyword>
<keyword id="KW-0694">RNA-binding</keyword>
<keyword id="KW-0808">Transferase</keyword>
<dbReference type="EC" id="2.7.7.8" evidence="1"/>
<dbReference type="EMBL" id="CP000961">
    <property type="protein sequence ID" value="ACA87820.1"/>
    <property type="molecule type" value="Genomic_DNA"/>
</dbReference>
<dbReference type="RefSeq" id="WP_012326153.1">
    <property type="nucleotide sequence ID" value="NC_010506.1"/>
</dbReference>
<dbReference type="SMR" id="B1KRQ5"/>
<dbReference type="STRING" id="392500.Swoo_3556"/>
<dbReference type="KEGG" id="swd:Swoo_3556"/>
<dbReference type="eggNOG" id="COG1185">
    <property type="taxonomic scope" value="Bacteria"/>
</dbReference>
<dbReference type="HOGENOM" id="CLU_004217_2_2_6"/>
<dbReference type="Proteomes" id="UP000002168">
    <property type="component" value="Chromosome"/>
</dbReference>
<dbReference type="GO" id="GO:0005829">
    <property type="term" value="C:cytosol"/>
    <property type="evidence" value="ECO:0007669"/>
    <property type="project" value="TreeGrafter"/>
</dbReference>
<dbReference type="GO" id="GO:0000175">
    <property type="term" value="F:3'-5'-RNA exonuclease activity"/>
    <property type="evidence" value="ECO:0007669"/>
    <property type="project" value="TreeGrafter"/>
</dbReference>
<dbReference type="GO" id="GO:0000287">
    <property type="term" value="F:magnesium ion binding"/>
    <property type="evidence" value="ECO:0007669"/>
    <property type="project" value="UniProtKB-UniRule"/>
</dbReference>
<dbReference type="GO" id="GO:0004654">
    <property type="term" value="F:polyribonucleotide nucleotidyltransferase activity"/>
    <property type="evidence" value="ECO:0007669"/>
    <property type="project" value="UniProtKB-UniRule"/>
</dbReference>
<dbReference type="GO" id="GO:0003723">
    <property type="term" value="F:RNA binding"/>
    <property type="evidence" value="ECO:0007669"/>
    <property type="project" value="UniProtKB-UniRule"/>
</dbReference>
<dbReference type="GO" id="GO:0006402">
    <property type="term" value="P:mRNA catabolic process"/>
    <property type="evidence" value="ECO:0007669"/>
    <property type="project" value="UniProtKB-UniRule"/>
</dbReference>
<dbReference type="GO" id="GO:0006396">
    <property type="term" value="P:RNA processing"/>
    <property type="evidence" value="ECO:0007669"/>
    <property type="project" value="InterPro"/>
</dbReference>
<dbReference type="CDD" id="cd02393">
    <property type="entry name" value="KH-I_PNPase"/>
    <property type="match status" value="1"/>
</dbReference>
<dbReference type="CDD" id="cd11363">
    <property type="entry name" value="RNase_PH_PNPase_1"/>
    <property type="match status" value="1"/>
</dbReference>
<dbReference type="CDD" id="cd11364">
    <property type="entry name" value="RNase_PH_PNPase_2"/>
    <property type="match status" value="1"/>
</dbReference>
<dbReference type="CDD" id="cd04472">
    <property type="entry name" value="S1_PNPase"/>
    <property type="match status" value="1"/>
</dbReference>
<dbReference type="FunFam" id="2.40.50.140:FF:000023">
    <property type="entry name" value="Polyribonucleotide nucleotidyltransferase"/>
    <property type="match status" value="1"/>
</dbReference>
<dbReference type="FunFam" id="3.30.1370.10:FF:000001">
    <property type="entry name" value="Polyribonucleotide nucleotidyltransferase"/>
    <property type="match status" value="1"/>
</dbReference>
<dbReference type="FunFam" id="3.30.230.70:FF:000001">
    <property type="entry name" value="Polyribonucleotide nucleotidyltransferase"/>
    <property type="match status" value="1"/>
</dbReference>
<dbReference type="FunFam" id="3.30.230.70:FF:000002">
    <property type="entry name" value="Polyribonucleotide nucleotidyltransferase"/>
    <property type="match status" value="1"/>
</dbReference>
<dbReference type="Gene3D" id="3.30.230.70">
    <property type="entry name" value="GHMP Kinase, N-terminal domain"/>
    <property type="match status" value="2"/>
</dbReference>
<dbReference type="Gene3D" id="3.30.1370.10">
    <property type="entry name" value="K Homology domain, type 1"/>
    <property type="match status" value="1"/>
</dbReference>
<dbReference type="Gene3D" id="2.40.50.140">
    <property type="entry name" value="Nucleic acid-binding proteins"/>
    <property type="match status" value="1"/>
</dbReference>
<dbReference type="HAMAP" id="MF_01595">
    <property type="entry name" value="PNPase"/>
    <property type="match status" value="1"/>
</dbReference>
<dbReference type="InterPro" id="IPR001247">
    <property type="entry name" value="ExoRNase_PH_dom1"/>
</dbReference>
<dbReference type="InterPro" id="IPR015847">
    <property type="entry name" value="ExoRNase_PH_dom2"/>
</dbReference>
<dbReference type="InterPro" id="IPR036345">
    <property type="entry name" value="ExoRNase_PH_dom2_sf"/>
</dbReference>
<dbReference type="InterPro" id="IPR004087">
    <property type="entry name" value="KH_dom"/>
</dbReference>
<dbReference type="InterPro" id="IPR004088">
    <property type="entry name" value="KH_dom_type_1"/>
</dbReference>
<dbReference type="InterPro" id="IPR036612">
    <property type="entry name" value="KH_dom_type_1_sf"/>
</dbReference>
<dbReference type="InterPro" id="IPR012340">
    <property type="entry name" value="NA-bd_OB-fold"/>
</dbReference>
<dbReference type="InterPro" id="IPR012162">
    <property type="entry name" value="PNPase"/>
</dbReference>
<dbReference type="InterPro" id="IPR027408">
    <property type="entry name" value="PNPase/RNase_PH_dom_sf"/>
</dbReference>
<dbReference type="InterPro" id="IPR015848">
    <property type="entry name" value="PNPase_PH_RNA-bd_bac/org-type"/>
</dbReference>
<dbReference type="InterPro" id="IPR036456">
    <property type="entry name" value="PNPase_PH_RNA-bd_sf"/>
</dbReference>
<dbReference type="InterPro" id="IPR020568">
    <property type="entry name" value="Ribosomal_Su5_D2-typ_SF"/>
</dbReference>
<dbReference type="InterPro" id="IPR003029">
    <property type="entry name" value="S1_domain"/>
</dbReference>
<dbReference type="NCBIfam" id="TIGR03591">
    <property type="entry name" value="polynuc_phos"/>
    <property type="match status" value="1"/>
</dbReference>
<dbReference type="NCBIfam" id="NF008805">
    <property type="entry name" value="PRK11824.1"/>
    <property type="match status" value="1"/>
</dbReference>
<dbReference type="PANTHER" id="PTHR11252">
    <property type="entry name" value="POLYRIBONUCLEOTIDE NUCLEOTIDYLTRANSFERASE"/>
    <property type="match status" value="1"/>
</dbReference>
<dbReference type="PANTHER" id="PTHR11252:SF0">
    <property type="entry name" value="POLYRIBONUCLEOTIDE NUCLEOTIDYLTRANSFERASE 1, MITOCHONDRIAL"/>
    <property type="match status" value="1"/>
</dbReference>
<dbReference type="Pfam" id="PF00013">
    <property type="entry name" value="KH_1"/>
    <property type="match status" value="1"/>
</dbReference>
<dbReference type="Pfam" id="PF03726">
    <property type="entry name" value="PNPase"/>
    <property type="match status" value="1"/>
</dbReference>
<dbReference type="Pfam" id="PF01138">
    <property type="entry name" value="RNase_PH"/>
    <property type="match status" value="2"/>
</dbReference>
<dbReference type="Pfam" id="PF03725">
    <property type="entry name" value="RNase_PH_C"/>
    <property type="match status" value="2"/>
</dbReference>
<dbReference type="Pfam" id="PF00575">
    <property type="entry name" value="S1"/>
    <property type="match status" value="1"/>
</dbReference>
<dbReference type="PIRSF" id="PIRSF005499">
    <property type="entry name" value="PNPase"/>
    <property type="match status" value="1"/>
</dbReference>
<dbReference type="SMART" id="SM00322">
    <property type="entry name" value="KH"/>
    <property type="match status" value="1"/>
</dbReference>
<dbReference type="SMART" id="SM00316">
    <property type="entry name" value="S1"/>
    <property type="match status" value="1"/>
</dbReference>
<dbReference type="SUPFAM" id="SSF54791">
    <property type="entry name" value="Eukaryotic type KH-domain (KH-domain type I)"/>
    <property type="match status" value="1"/>
</dbReference>
<dbReference type="SUPFAM" id="SSF50249">
    <property type="entry name" value="Nucleic acid-binding proteins"/>
    <property type="match status" value="1"/>
</dbReference>
<dbReference type="SUPFAM" id="SSF46915">
    <property type="entry name" value="Polynucleotide phosphorylase/guanosine pentaphosphate synthase (PNPase/GPSI), domain 3"/>
    <property type="match status" value="1"/>
</dbReference>
<dbReference type="SUPFAM" id="SSF55666">
    <property type="entry name" value="Ribonuclease PH domain 2-like"/>
    <property type="match status" value="2"/>
</dbReference>
<dbReference type="SUPFAM" id="SSF54211">
    <property type="entry name" value="Ribosomal protein S5 domain 2-like"/>
    <property type="match status" value="2"/>
</dbReference>
<dbReference type="PROSITE" id="PS50084">
    <property type="entry name" value="KH_TYPE_1"/>
    <property type="match status" value="1"/>
</dbReference>
<dbReference type="PROSITE" id="PS50126">
    <property type="entry name" value="S1"/>
    <property type="match status" value="1"/>
</dbReference>
<protein>
    <recommendedName>
        <fullName evidence="1">Polyribonucleotide nucleotidyltransferase</fullName>
        <ecNumber evidence="1">2.7.7.8</ecNumber>
    </recommendedName>
    <alternativeName>
        <fullName evidence="1">Polynucleotide phosphorylase</fullName>
        <shortName evidence="1">PNPase</shortName>
    </alternativeName>
</protein>
<name>PNP_SHEWM</name>
<sequence>MNPIVKSFEYGQHTVTLETGVIARQANAAVLASMGDTTVLVTVVGKKAEDVGRDFFPLTVNYQEKTYAAGKIPGGFFKREGRPSENETLIARLIDRPIRPLFPNGFKNEVQVIITVVSVDPEINPDVISMIGTSAALSISDLPFNGPLGVARVGYTNGEYVLNPNVSQLAESDLDLVVAGTQGAVLMVESEAASLPEEVMLGGVVYGHDQQQVVINAINELTAEAGKTKWDWTAPAEDTDLVEKIKGLAEAELTNAYQIADKHERRDAVIALKNAAVAKLVEENADVDLREVDKLLGSLEKKVVRSRIISGSPRIDGREPDMVRALNVMAGVLPRTHGSSLFTRGETQALVTCTLGTERDAQKVDSIMGEYTNRFMLHYNFPPYSVGETGMVGSPKRREIGHGKLAWRGINAVMPTAEEFPYSVRVVSEITESNGSSSMASVCGTSLALMDAGVPIKTSVAGIAMGLVKEGDDFVVLSDILGDEDHLGDMDFKVAGTRDGITALQMDIKIEGITKEIMQIALQQAYGARVHILNVMDQAISGHREDISDHAPRITTLKINPEKIRDVIGKGGATIRALTEETGTTIELEDDGTVKIASANGEATKEAIRRIEEITAEVEVGTVYNGKVVRIVDFGAFVTILPGKDGLVHISQIAEERVANVSDYLQVGQEVKVKVMEVDRQGRVRLSMKEAQPKAEAAPAAE</sequence>
<gene>
    <name evidence="1" type="primary">pnp</name>
    <name type="ordered locus">Swoo_3556</name>
</gene>
<proteinExistence type="inferred from homology"/>
<comment type="function">
    <text evidence="1">Involved in mRNA degradation. Catalyzes the phosphorolysis of single-stranded polyribonucleotides processively in the 3'- to 5'-direction.</text>
</comment>
<comment type="catalytic activity">
    <reaction evidence="1">
        <text>RNA(n+1) + phosphate = RNA(n) + a ribonucleoside 5'-diphosphate</text>
        <dbReference type="Rhea" id="RHEA:22096"/>
        <dbReference type="Rhea" id="RHEA-COMP:14527"/>
        <dbReference type="Rhea" id="RHEA-COMP:17342"/>
        <dbReference type="ChEBI" id="CHEBI:43474"/>
        <dbReference type="ChEBI" id="CHEBI:57930"/>
        <dbReference type="ChEBI" id="CHEBI:140395"/>
        <dbReference type="EC" id="2.7.7.8"/>
    </reaction>
</comment>
<comment type="cofactor">
    <cofactor evidence="1">
        <name>Mg(2+)</name>
        <dbReference type="ChEBI" id="CHEBI:18420"/>
    </cofactor>
</comment>
<comment type="subunit">
    <text evidence="1">Component of the RNA degradosome, which is a multiprotein complex involved in RNA processing and mRNA degradation.</text>
</comment>
<comment type="subcellular location">
    <subcellularLocation>
        <location evidence="1">Cytoplasm</location>
    </subcellularLocation>
</comment>
<comment type="similarity">
    <text evidence="1">Belongs to the polyribonucleotide nucleotidyltransferase family.</text>
</comment>
<feature type="chain" id="PRO_1000192491" description="Polyribonucleotide nucleotidyltransferase">
    <location>
        <begin position="1"/>
        <end position="702"/>
    </location>
</feature>
<feature type="domain" description="KH" evidence="1">
    <location>
        <begin position="552"/>
        <end position="611"/>
    </location>
</feature>
<feature type="domain" description="S1 motif" evidence="1">
    <location>
        <begin position="621"/>
        <end position="689"/>
    </location>
</feature>
<feature type="binding site" evidence="1">
    <location>
        <position position="485"/>
    </location>
    <ligand>
        <name>Mg(2+)</name>
        <dbReference type="ChEBI" id="CHEBI:18420"/>
    </ligand>
</feature>
<feature type="binding site" evidence="1">
    <location>
        <position position="491"/>
    </location>
    <ligand>
        <name>Mg(2+)</name>
        <dbReference type="ChEBI" id="CHEBI:18420"/>
    </ligand>
</feature>